<dbReference type="EMBL" id="AC016829">
    <property type="protein sequence ID" value="AAF26795.1"/>
    <property type="molecule type" value="Genomic_DNA"/>
</dbReference>
<dbReference type="EMBL" id="CP002686">
    <property type="protein sequence ID" value="AEE74048.1"/>
    <property type="molecule type" value="Genomic_DNA"/>
</dbReference>
<dbReference type="RefSeq" id="NP_187068.1">
    <property type="nucleotide sequence ID" value="NM_111289.3"/>
</dbReference>
<dbReference type="SMR" id="Q9M8X4"/>
<dbReference type="FunCoup" id="Q9M8X4">
    <property type="interactions" value="27"/>
</dbReference>
<dbReference type="STRING" id="3702.Q9M8X4"/>
<dbReference type="GlyGen" id="Q9M8X4">
    <property type="glycosylation" value="2 sites"/>
</dbReference>
<dbReference type="PaxDb" id="3702-AT3G04180.1"/>
<dbReference type="ProteomicsDB" id="228967"/>
<dbReference type="EnsemblPlants" id="AT3G04180.1">
    <property type="protein sequence ID" value="AT3G04180.1"/>
    <property type="gene ID" value="AT3G04180"/>
</dbReference>
<dbReference type="GeneID" id="819573"/>
<dbReference type="Gramene" id="AT3G04180.1">
    <property type="protein sequence ID" value="AT3G04180.1"/>
    <property type="gene ID" value="AT3G04180"/>
</dbReference>
<dbReference type="KEGG" id="ath:AT3G04180"/>
<dbReference type="Araport" id="AT3G04180"/>
<dbReference type="TAIR" id="AT3G04180"/>
<dbReference type="HOGENOM" id="CLU_015790_0_0_1"/>
<dbReference type="InParanoid" id="Q9M8X4"/>
<dbReference type="OMA" id="FQYNIGD"/>
<dbReference type="PhylomeDB" id="Q9M8X4"/>
<dbReference type="PRO" id="PR:Q9M8X4"/>
<dbReference type="Proteomes" id="UP000006548">
    <property type="component" value="Chromosome 3"/>
</dbReference>
<dbReference type="ExpressionAtlas" id="Q9M8X4">
    <property type="expression patterns" value="baseline"/>
</dbReference>
<dbReference type="GO" id="GO:0048046">
    <property type="term" value="C:apoplast"/>
    <property type="evidence" value="ECO:0007669"/>
    <property type="project" value="UniProtKB-SubCell"/>
</dbReference>
<dbReference type="GO" id="GO:0030145">
    <property type="term" value="F:manganese ion binding"/>
    <property type="evidence" value="ECO:0007669"/>
    <property type="project" value="InterPro"/>
</dbReference>
<dbReference type="CDD" id="cd02241">
    <property type="entry name" value="cupin_OxOx"/>
    <property type="match status" value="1"/>
</dbReference>
<dbReference type="FunFam" id="2.60.120.10:FF:000005">
    <property type="entry name" value="Germin-like protein subfamily 1 member 8"/>
    <property type="match status" value="1"/>
</dbReference>
<dbReference type="Gene3D" id="2.60.120.10">
    <property type="entry name" value="Jelly Rolls"/>
    <property type="match status" value="1"/>
</dbReference>
<dbReference type="InterPro" id="IPR006045">
    <property type="entry name" value="Cupin_1"/>
</dbReference>
<dbReference type="InterPro" id="IPR001929">
    <property type="entry name" value="Germin"/>
</dbReference>
<dbReference type="InterPro" id="IPR014710">
    <property type="entry name" value="RmlC-like_jellyroll"/>
</dbReference>
<dbReference type="InterPro" id="IPR011051">
    <property type="entry name" value="RmlC_Cupin_sf"/>
</dbReference>
<dbReference type="PANTHER" id="PTHR31238">
    <property type="entry name" value="GERMIN-LIKE PROTEIN SUBFAMILY 3 MEMBER 3"/>
    <property type="match status" value="1"/>
</dbReference>
<dbReference type="Pfam" id="PF00190">
    <property type="entry name" value="Cupin_1"/>
    <property type="match status" value="1"/>
</dbReference>
<dbReference type="PRINTS" id="PR00325">
    <property type="entry name" value="GERMIN"/>
</dbReference>
<dbReference type="SMART" id="SM00835">
    <property type="entry name" value="Cupin_1"/>
    <property type="match status" value="1"/>
</dbReference>
<dbReference type="SUPFAM" id="SSF51182">
    <property type="entry name" value="RmlC-like cupins"/>
    <property type="match status" value="1"/>
</dbReference>
<comment type="function">
    <text>May play a role in plant defense. Probably has no oxalate oxidase activity even if the active site is conserved.</text>
</comment>
<comment type="subunit">
    <text evidence="1">Oligomer (believed to be a pentamer but probably hexamer).</text>
</comment>
<comment type="subcellular location">
    <subcellularLocation>
        <location evidence="1">Secreted</location>
        <location evidence="1">Extracellular space</location>
        <location evidence="1">Apoplast</location>
    </subcellularLocation>
</comment>
<comment type="similarity">
    <text evidence="3">Belongs to the germin family.</text>
</comment>
<feature type="signal peptide" evidence="2">
    <location>
        <begin position="1"/>
        <end position="24"/>
    </location>
</feature>
<feature type="chain" id="PRO_0000010804" description="Germin-like protein subfamily 1 member 4">
    <location>
        <begin position="25"/>
        <end position="222"/>
    </location>
</feature>
<feature type="domain" description="Cupin type-1" evidence="2">
    <location>
        <begin position="64"/>
        <end position="215"/>
    </location>
</feature>
<feature type="binding site" evidence="1">
    <location>
        <position position="112"/>
    </location>
    <ligand>
        <name>Mn(2+)</name>
        <dbReference type="ChEBI" id="CHEBI:29035"/>
    </ligand>
</feature>
<feature type="binding site" evidence="1">
    <location>
        <position position="114"/>
    </location>
    <ligand>
        <name>Mn(2+)</name>
        <dbReference type="ChEBI" id="CHEBI:29035"/>
    </ligand>
</feature>
<feature type="binding site" evidence="1">
    <location>
        <position position="161"/>
    </location>
    <ligand>
        <name>Mn(2+)</name>
        <dbReference type="ChEBI" id="CHEBI:29035"/>
    </ligand>
</feature>
<feature type="site" description="Probable non-functional manganese-binding site">
    <location>
        <position position="119"/>
    </location>
</feature>
<feature type="glycosylation site" description="N-linked (GlcNAc...) asparagine" evidence="2">
    <location>
        <position position="38"/>
    </location>
</feature>
<feature type="glycosylation site" description="N-linked (GlcNAc...) asparagine" evidence="2">
    <location>
        <position position="139"/>
    </location>
</feature>
<feature type="disulfide bond" evidence="1">
    <location>
        <begin position="34"/>
        <end position="50"/>
    </location>
</feature>
<protein>
    <recommendedName>
        <fullName>Germin-like protein subfamily 1 member 4</fullName>
    </recommendedName>
</protein>
<sequence length="222" mass="24102">MEGLLQFLLAKIILLALASSFVYCYDPSPLQDYCVATNETNGVYVNGEFCKDPKRVTTNDFYTSGLNVPGNTIIGPGARNTVVDVERLPGLNTLGVDIARYDFAPGGLDPPHTHPRGSQIFLVMKGKLFVGFVSSNEYNYTLFTKVLYPGDVFVFPKGLIHFHANIGETNAVVISAGGSQDPGRIIIGDAVFGSKPLIDPKVLAKAFALDYNKVKYLQAVFS</sequence>
<name>GL14_ARATH</name>
<proteinExistence type="inferred from homology"/>
<reference key="1">
    <citation type="journal article" date="2000" name="Nature">
        <title>Sequence and analysis of chromosome 3 of the plant Arabidopsis thaliana.</title>
        <authorList>
            <person name="Salanoubat M."/>
            <person name="Lemcke K."/>
            <person name="Rieger M."/>
            <person name="Ansorge W."/>
            <person name="Unseld M."/>
            <person name="Fartmann B."/>
            <person name="Valle G."/>
            <person name="Bloecker H."/>
            <person name="Perez-Alonso M."/>
            <person name="Obermaier B."/>
            <person name="Delseny M."/>
            <person name="Boutry M."/>
            <person name="Grivell L.A."/>
            <person name="Mache R."/>
            <person name="Puigdomenech P."/>
            <person name="De Simone V."/>
            <person name="Choisne N."/>
            <person name="Artiguenave F."/>
            <person name="Robert C."/>
            <person name="Brottier P."/>
            <person name="Wincker P."/>
            <person name="Cattolico L."/>
            <person name="Weissenbach J."/>
            <person name="Saurin W."/>
            <person name="Quetier F."/>
            <person name="Schaefer M."/>
            <person name="Mueller-Auer S."/>
            <person name="Gabel C."/>
            <person name="Fuchs M."/>
            <person name="Benes V."/>
            <person name="Wurmbach E."/>
            <person name="Drzonek H."/>
            <person name="Erfle H."/>
            <person name="Jordan N."/>
            <person name="Bangert S."/>
            <person name="Wiedelmann R."/>
            <person name="Kranz H."/>
            <person name="Voss H."/>
            <person name="Holland R."/>
            <person name="Brandt P."/>
            <person name="Nyakatura G."/>
            <person name="Vezzi A."/>
            <person name="D'Angelo M."/>
            <person name="Pallavicini A."/>
            <person name="Toppo S."/>
            <person name="Simionati B."/>
            <person name="Conrad A."/>
            <person name="Hornischer K."/>
            <person name="Kauer G."/>
            <person name="Loehnert T.-H."/>
            <person name="Nordsiek G."/>
            <person name="Reichelt J."/>
            <person name="Scharfe M."/>
            <person name="Schoen O."/>
            <person name="Bargues M."/>
            <person name="Terol J."/>
            <person name="Climent J."/>
            <person name="Navarro P."/>
            <person name="Collado C."/>
            <person name="Perez-Perez A."/>
            <person name="Ottenwaelder B."/>
            <person name="Duchemin D."/>
            <person name="Cooke R."/>
            <person name="Laudie M."/>
            <person name="Berger-Llauro C."/>
            <person name="Purnelle B."/>
            <person name="Masuy D."/>
            <person name="de Haan M."/>
            <person name="Maarse A.C."/>
            <person name="Alcaraz J.-P."/>
            <person name="Cottet A."/>
            <person name="Casacuberta E."/>
            <person name="Monfort A."/>
            <person name="Argiriou A."/>
            <person name="Flores M."/>
            <person name="Liguori R."/>
            <person name="Vitale D."/>
            <person name="Mannhaupt G."/>
            <person name="Haase D."/>
            <person name="Schoof H."/>
            <person name="Rudd S."/>
            <person name="Zaccaria P."/>
            <person name="Mewes H.-W."/>
            <person name="Mayer K.F.X."/>
            <person name="Kaul S."/>
            <person name="Town C.D."/>
            <person name="Koo H.L."/>
            <person name="Tallon L.J."/>
            <person name="Jenkins J."/>
            <person name="Rooney T."/>
            <person name="Rizzo M."/>
            <person name="Walts A."/>
            <person name="Utterback T."/>
            <person name="Fujii C.Y."/>
            <person name="Shea T.P."/>
            <person name="Creasy T.H."/>
            <person name="Haas B."/>
            <person name="Maiti R."/>
            <person name="Wu D."/>
            <person name="Peterson J."/>
            <person name="Van Aken S."/>
            <person name="Pai G."/>
            <person name="Militscher J."/>
            <person name="Sellers P."/>
            <person name="Gill J.E."/>
            <person name="Feldblyum T.V."/>
            <person name="Preuss D."/>
            <person name="Lin X."/>
            <person name="Nierman W.C."/>
            <person name="Salzberg S.L."/>
            <person name="White O."/>
            <person name="Venter J.C."/>
            <person name="Fraser C.M."/>
            <person name="Kaneko T."/>
            <person name="Nakamura Y."/>
            <person name="Sato S."/>
            <person name="Kato T."/>
            <person name="Asamizu E."/>
            <person name="Sasamoto S."/>
            <person name="Kimura T."/>
            <person name="Idesawa K."/>
            <person name="Kawashima K."/>
            <person name="Kishida Y."/>
            <person name="Kiyokawa C."/>
            <person name="Kohara M."/>
            <person name="Matsumoto M."/>
            <person name="Matsuno A."/>
            <person name="Muraki A."/>
            <person name="Nakayama S."/>
            <person name="Nakazaki N."/>
            <person name="Shinpo S."/>
            <person name="Takeuchi C."/>
            <person name="Wada T."/>
            <person name="Watanabe A."/>
            <person name="Yamada M."/>
            <person name="Yasuda M."/>
            <person name="Tabata S."/>
        </authorList>
    </citation>
    <scope>NUCLEOTIDE SEQUENCE [LARGE SCALE GENOMIC DNA]</scope>
    <source>
        <strain>cv. Columbia</strain>
    </source>
</reference>
<reference key="2">
    <citation type="journal article" date="2017" name="Plant J.">
        <title>Araport11: a complete reannotation of the Arabidopsis thaliana reference genome.</title>
        <authorList>
            <person name="Cheng C.Y."/>
            <person name="Krishnakumar V."/>
            <person name="Chan A.P."/>
            <person name="Thibaud-Nissen F."/>
            <person name="Schobel S."/>
            <person name="Town C.D."/>
        </authorList>
    </citation>
    <scope>GENOME REANNOTATION</scope>
    <source>
        <strain>cv. Columbia</strain>
    </source>
</reference>
<accession>Q9M8X4</accession>
<keyword id="KW-0052">Apoplast</keyword>
<keyword id="KW-1015">Disulfide bond</keyword>
<keyword id="KW-0325">Glycoprotein</keyword>
<keyword id="KW-0464">Manganese</keyword>
<keyword id="KW-0479">Metal-binding</keyword>
<keyword id="KW-1185">Reference proteome</keyword>
<keyword id="KW-0964">Secreted</keyword>
<keyword id="KW-0732">Signal</keyword>
<evidence type="ECO:0000250" key="1"/>
<evidence type="ECO:0000255" key="2"/>
<evidence type="ECO:0000305" key="3"/>
<organism>
    <name type="scientific">Arabidopsis thaliana</name>
    <name type="common">Mouse-ear cress</name>
    <dbReference type="NCBI Taxonomy" id="3702"/>
    <lineage>
        <taxon>Eukaryota</taxon>
        <taxon>Viridiplantae</taxon>
        <taxon>Streptophyta</taxon>
        <taxon>Embryophyta</taxon>
        <taxon>Tracheophyta</taxon>
        <taxon>Spermatophyta</taxon>
        <taxon>Magnoliopsida</taxon>
        <taxon>eudicotyledons</taxon>
        <taxon>Gunneridae</taxon>
        <taxon>Pentapetalae</taxon>
        <taxon>rosids</taxon>
        <taxon>malvids</taxon>
        <taxon>Brassicales</taxon>
        <taxon>Brassicaceae</taxon>
        <taxon>Camelineae</taxon>
        <taxon>Arabidopsis</taxon>
    </lineage>
</organism>
<gene>
    <name type="ordered locus">At3g04180</name>
    <name type="ORF">T6K12.20</name>
</gene>